<evidence type="ECO:0000255" key="1">
    <source>
        <dbReference type="HAMAP-Rule" id="MF_01521"/>
    </source>
</evidence>
<reference key="1">
    <citation type="journal article" date="2008" name="J. Bacteriol.">
        <title>The genome of Heliobacterium modesticaldum, a phototrophic representative of the Firmicutes containing the simplest photosynthetic apparatus.</title>
        <authorList>
            <person name="Sattley W.M."/>
            <person name="Madigan M.T."/>
            <person name="Swingley W.D."/>
            <person name="Cheung P.C."/>
            <person name="Clocksin K.M."/>
            <person name="Conrad A.L."/>
            <person name="Dejesa L.C."/>
            <person name="Honchak B.M."/>
            <person name="Jung D.O."/>
            <person name="Karbach L.E."/>
            <person name="Kurdoglu A."/>
            <person name="Lahiri S."/>
            <person name="Mastrian S.D."/>
            <person name="Page L.E."/>
            <person name="Taylor H.L."/>
            <person name="Wang Z.T."/>
            <person name="Raymond J."/>
            <person name="Chen M."/>
            <person name="Blankenship R.E."/>
            <person name="Touchman J.W."/>
        </authorList>
    </citation>
    <scope>NUCLEOTIDE SEQUENCE [LARGE SCALE GENOMIC DNA]</scope>
    <source>
        <strain>ATCC 51547 / Ice1</strain>
    </source>
</reference>
<comment type="function">
    <text evidence="1">Probably functions as a manganese efflux pump.</text>
</comment>
<comment type="subcellular location">
    <subcellularLocation>
        <location evidence="1">Cell membrane</location>
        <topology evidence="1">Multi-pass membrane protein</topology>
    </subcellularLocation>
</comment>
<comment type="similarity">
    <text evidence="1">Belongs to the MntP (TC 9.B.29) family.</text>
</comment>
<name>MNTP_HELMI</name>
<organism>
    <name type="scientific">Heliobacterium modesticaldum (strain ATCC 51547 / Ice1)</name>
    <dbReference type="NCBI Taxonomy" id="498761"/>
    <lineage>
        <taxon>Bacteria</taxon>
        <taxon>Bacillati</taxon>
        <taxon>Bacillota</taxon>
        <taxon>Clostridia</taxon>
        <taxon>Eubacteriales</taxon>
        <taxon>Heliobacteriaceae</taxon>
        <taxon>Heliomicrobium</taxon>
    </lineage>
</organism>
<sequence>MTYWTLGVLAVGLGADAFSMALGIGMEGVRRRDAFMLGLVVALFHIFMPWFGILAGSALGLVVGRLASFIGAAVLFFLGGRMIYHAWKEKREGPAFPVSVPRRRGNGSGGGAIVGAGAIVGGRLFAPTRWELVVIGAAVSMDALSVGFSLGTVGAQLLPTVLTFGVVAGIMTVAGCRIGQQVSRMLGATAQLAGGLILLGIGIKLLLGSASPG</sequence>
<proteinExistence type="inferred from homology"/>
<keyword id="KW-1003">Cell membrane</keyword>
<keyword id="KW-0406">Ion transport</keyword>
<keyword id="KW-0464">Manganese</keyword>
<keyword id="KW-0472">Membrane</keyword>
<keyword id="KW-1185">Reference proteome</keyword>
<keyword id="KW-0812">Transmembrane</keyword>
<keyword id="KW-1133">Transmembrane helix</keyword>
<keyword id="KW-0813">Transport</keyword>
<feature type="chain" id="PRO_1000200033" description="Putative manganese efflux pump MntP">
    <location>
        <begin position="1"/>
        <end position="213"/>
    </location>
</feature>
<feature type="transmembrane region" description="Helical" evidence="1">
    <location>
        <begin position="6"/>
        <end position="26"/>
    </location>
</feature>
<feature type="transmembrane region" description="Helical" evidence="1">
    <location>
        <begin position="34"/>
        <end position="54"/>
    </location>
</feature>
<feature type="transmembrane region" description="Helical" evidence="1">
    <location>
        <begin position="58"/>
        <end position="78"/>
    </location>
</feature>
<feature type="transmembrane region" description="Helical" evidence="1">
    <location>
        <begin position="107"/>
        <end position="127"/>
    </location>
</feature>
<feature type="transmembrane region" description="Helical" evidence="1">
    <location>
        <begin position="132"/>
        <end position="152"/>
    </location>
</feature>
<feature type="transmembrane region" description="Helical" evidence="1">
    <location>
        <begin position="153"/>
        <end position="173"/>
    </location>
</feature>
<feature type="transmembrane region" description="Helical" evidence="1">
    <location>
        <begin position="192"/>
        <end position="212"/>
    </location>
</feature>
<accession>B0TI68</accession>
<gene>
    <name evidence="1" type="primary">mntP</name>
    <name type="ordered locus">Helmi_08630</name>
    <name type="ORF">HM1_1086</name>
</gene>
<protein>
    <recommendedName>
        <fullName evidence="1">Putative manganese efflux pump MntP</fullName>
    </recommendedName>
</protein>
<dbReference type="EMBL" id="CP000930">
    <property type="protein sequence ID" value="ABZ83488.1"/>
    <property type="molecule type" value="Genomic_DNA"/>
</dbReference>
<dbReference type="RefSeq" id="WP_012282017.1">
    <property type="nucleotide sequence ID" value="NC_010337.2"/>
</dbReference>
<dbReference type="STRING" id="498761.HM1_1086"/>
<dbReference type="KEGG" id="hmo:HM1_1086"/>
<dbReference type="eggNOG" id="COG1971">
    <property type="taxonomic scope" value="Bacteria"/>
</dbReference>
<dbReference type="HOGENOM" id="CLU_096410_1_1_9"/>
<dbReference type="OrthoDB" id="1679700at2"/>
<dbReference type="Proteomes" id="UP000008550">
    <property type="component" value="Chromosome"/>
</dbReference>
<dbReference type="GO" id="GO:0005886">
    <property type="term" value="C:plasma membrane"/>
    <property type="evidence" value="ECO:0007669"/>
    <property type="project" value="UniProtKB-SubCell"/>
</dbReference>
<dbReference type="GO" id="GO:0005384">
    <property type="term" value="F:manganese ion transmembrane transporter activity"/>
    <property type="evidence" value="ECO:0007669"/>
    <property type="project" value="UniProtKB-UniRule"/>
</dbReference>
<dbReference type="HAMAP" id="MF_01521">
    <property type="entry name" value="MntP_pump"/>
    <property type="match status" value="1"/>
</dbReference>
<dbReference type="InterPro" id="IPR003810">
    <property type="entry name" value="Mntp/YtaF"/>
</dbReference>
<dbReference type="InterPro" id="IPR022929">
    <property type="entry name" value="Put_MntP"/>
</dbReference>
<dbReference type="PANTHER" id="PTHR35529">
    <property type="entry name" value="MANGANESE EFFLUX PUMP MNTP-RELATED"/>
    <property type="match status" value="1"/>
</dbReference>
<dbReference type="PANTHER" id="PTHR35529:SF1">
    <property type="entry name" value="MANGANESE EFFLUX PUMP MNTP-RELATED"/>
    <property type="match status" value="1"/>
</dbReference>
<dbReference type="Pfam" id="PF02659">
    <property type="entry name" value="Mntp"/>
    <property type="match status" value="2"/>
</dbReference>